<name>OLES2_BRANA</name>
<proteinExistence type="evidence at protein level"/>
<evidence type="ECO:0000250" key="1"/>
<evidence type="ECO:0000255" key="2"/>
<evidence type="ECO:0000256" key="3">
    <source>
        <dbReference type="SAM" id="MobiDB-lite"/>
    </source>
</evidence>
<evidence type="ECO:0000269" key="4">
    <source>
    </source>
</evidence>
<evidence type="ECO:0000305" key="5"/>
<comment type="function">
    <text evidence="1">May have a structural role to stabilize the lipid body during desiccation of the seed by preventing coalescence of the oil. Probably interacts with both lipid and phospholipid moieties of lipid bodies. May also provide recognition signals for specific lipase anchorage in lipolysis during seedling growth (By similarity).</text>
</comment>
<comment type="subcellular location">
    <subcellularLocation>
        <location evidence="4">Lipid droplet</location>
    </subcellularLocation>
    <subcellularLocation>
        <location evidence="4">Membrane</location>
        <topology evidence="4">Multi-pass membrane protein</topology>
    </subcellularLocation>
    <text>Surface of oil bodies. Oleosins exist at a monolayer lipid/water interface.</text>
</comment>
<comment type="similarity">
    <text evidence="5">Belongs to the oleosin family.</text>
</comment>
<protein>
    <recommendedName>
        <fullName>Oleosin S2-2</fullName>
    </recommendedName>
</protein>
<accession>C3S7F1</accession>
<keyword id="KW-0007">Acetylation</keyword>
<keyword id="KW-0551">Lipid droplet</keyword>
<keyword id="KW-0472">Membrane</keyword>
<keyword id="KW-0812">Transmembrane</keyword>
<keyword id="KW-1133">Transmembrane helix</keyword>
<sequence length="188" mass="19880">MATVERRVQVDPTDKRIHLQPQYEGDVGYGYGYGGRADYKSSGPSSNQIVALIVGVPVGGSLLALAGLTLAGSVIGLMLSVPLFLLFSPVIVPAAITIGLAVTAILASGLFGLTGLSSVSWVLNYLRGTSDTVPEQLDYAKRRMADAVGYAGQKGKEMGQYVQDKAHEAHDTSLTTETTEPGKTRRHT</sequence>
<organism>
    <name type="scientific">Brassica napus</name>
    <name type="common">Rape</name>
    <dbReference type="NCBI Taxonomy" id="3708"/>
    <lineage>
        <taxon>Eukaryota</taxon>
        <taxon>Viridiplantae</taxon>
        <taxon>Streptophyta</taxon>
        <taxon>Embryophyta</taxon>
        <taxon>Tracheophyta</taxon>
        <taxon>Spermatophyta</taxon>
        <taxon>Magnoliopsida</taxon>
        <taxon>eudicotyledons</taxon>
        <taxon>Gunneridae</taxon>
        <taxon>Pentapetalae</taxon>
        <taxon>rosids</taxon>
        <taxon>malvids</taxon>
        <taxon>Brassicales</taxon>
        <taxon>Brassicaceae</taxon>
        <taxon>Brassiceae</taxon>
        <taxon>Brassica</taxon>
    </lineage>
</organism>
<dbReference type="EMBL" id="EU678258">
    <property type="protein sequence ID" value="ACG69506.1"/>
    <property type="molecule type" value="mRNA"/>
</dbReference>
<dbReference type="RefSeq" id="XP_013725019.1">
    <property type="nucleotide sequence ID" value="XM_013869565.1"/>
</dbReference>
<dbReference type="SMR" id="C3S7F1"/>
<dbReference type="iPTMnet" id="C3S7F1"/>
<dbReference type="EnsemblPlants" id="CDY20040">
    <property type="protein sequence ID" value="CDY20040"/>
    <property type="gene ID" value="GSBRNA2T00009878001"/>
</dbReference>
<dbReference type="Gramene" id="CDY20040">
    <property type="protein sequence ID" value="CDY20040"/>
    <property type="gene ID" value="GSBRNA2T00009878001"/>
</dbReference>
<dbReference type="OMA" id="GHMGQRV"/>
<dbReference type="OrthoDB" id="1929188at2759"/>
<dbReference type="GO" id="GO:0016020">
    <property type="term" value="C:membrane"/>
    <property type="evidence" value="ECO:0007669"/>
    <property type="project" value="UniProtKB-SubCell"/>
</dbReference>
<dbReference type="GO" id="GO:0012511">
    <property type="term" value="C:monolayer-surrounded lipid storage body"/>
    <property type="evidence" value="ECO:0007669"/>
    <property type="project" value="InterPro"/>
</dbReference>
<dbReference type="GO" id="GO:0009791">
    <property type="term" value="P:post-embryonic development"/>
    <property type="evidence" value="ECO:0007669"/>
    <property type="project" value="UniProtKB-ARBA"/>
</dbReference>
<dbReference type="GO" id="GO:0048608">
    <property type="term" value="P:reproductive structure development"/>
    <property type="evidence" value="ECO:0007669"/>
    <property type="project" value="UniProtKB-ARBA"/>
</dbReference>
<dbReference type="InterPro" id="IPR000136">
    <property type="entry name" value="Oleosin"/>
</dbReference>
<dbReference type="PANTHER" id="PTHR33203:SF47">
    <property type="entry name" value="GENOME ASSEMBLY, CHROMOSOME: A09"/>
    <property type="match status" value="1"/>
</dbReference>
<dbReference type="PANTHER" id="PTHR33203">
    <property type="entry name" value="OLEOSIN"/>
    <property type="match status" value="1"/>
</dbReference>
<dbReference type="Pfam" id="PF01277">
    <property type="entry name" value="Oleosin"/>
    <property type="match status" value="1"/>
</dbReference>
<reference key="1">
    <citation type="journal article" date="2009" name="Proteomics">
        <title>Protein composition of oil bodies from mature Brassica napus seeds.</title>
        <authorList>
            <person name="Jolivet P."/>
            <person name="Boulard C."/>
            <person name="Bellamy A."/>
            <person name="Larre C."/>
            <person name="Barre M."/>
            <person name="Rogniaux H."/>
            <person name="d'Andrea S."/>
            <person name="Chardot T."/>
            <person name="Nesi N."/>
        </authorList>
    </citation>
    <scope>NUCLEOTIDE SEQUENCE [MRNA]</scope>
    <scope>ACETYLATION AT ALA-2</scope>
    <scope>CLEAVAGE OF INITIATOR METHIONINE</scope>
    <scope>SUBCELLULAR LOCATION</scope>
    <scope>IDENTIFICATION BY MASS SPECTROMETRY</scope>
</reference>
<feature type="initiator methionine" description="Removed" evidence="4">
    <location>
        <position position="1"/>
    </location>
</feature>
<feature type="chain" id="PRO_0000381928" description="Oleosin S2-2">
    <location>
        <begin position="2"/>
        <end position="188"/>
    </location>
</feature>
<feature type="transmembrane region" description="Helical" evidence="2">
    <location>
        <begin position="49"/>
        <end position="69"/>
    </location>
</feature>
<feature type="transmembrane region" description="Helical" evidence="2">
    <location>
        <begin position="74"/>
        <end position="94"/>
    </location>
</feature>
<feature type="transmembrane region" description="Helical" evidence="2">
    <location>
        <begin position="96"/>
        <end position="116"/>
    </location>
</feature>
<feature type="region of interest" description="Polar" evidence="1">
    <location>
        <begin position="2"/>
        <end position="51"/>
    </location>
</feature>
<feature type="region of interest" description="Hydrophobic" evidence="1">
    <location>
        <begin position="52"/>
        <end position="125"/>
    </location>
</feature>
<feature type="region of interest" description="Disordered" evidence="3">
    <location>
        <begin position="164"/>
        <end position="188"/>
    </location>
</feature>
<feature type="compositionally biased region" description="Polar residues" evidence="3">
    <location>
        <begin position="172"/>
        <end position="181"/>
    </location>
</feature>
<feature type="modified residue" description="N-acetylalanine" evidence="4">
    <location>
        <position position="2"/>
    </location>
</feature>
<gene>
    <name type="primary">S2</name>
</gene>